<dbReference type="EC" id="7.1.2.2" evidence="1"/>
<dbReference type="EMBL" id="FM211187">
    <property type="protein sequence ID" value="CAR69256.1"/>
    <property type="molecule type" value="Genomic_DNA"/>
</dbReference>
<dbReference type="RefSeq" id="WP_000996644.1">
    <property type="nucleotide sequence ID" value="NC_011900.1"/>
</dbReference>
<dbReference type="SMR" id="B8ZLB1"/>
<dbReference type="KEGG" id="sne:SPN23F14740"/>
<dbReference type="HOGENOM" id="CLU_010091_2_1_9"/>
<dbReference type="GO" id="GO:0005886">
    <property type="term" value="C:plasma membrane"/>
    <property type="evidence" value="ECO:0007669"/>
    <property type="project" value="UniProtKB-SubCell"/>
</dbReference>
<dbReference type="GO" id="GO:0045259">
    <property type="term" value="C:proton-transporting ATP synthase complex"/>
    <property type="evidence" value="ECO:0007669"/>
    <property type="project" value="UniProtKB-KW"/>
</dbReference>
<dbReference type="GO" id="GO:0043531">
    <property type="term" value="F:ADP binding"/>
    <property type="evidence" value="ECO:0007669"/>
    <property type="project" value="TreeGrafter"/>
</dbReference>
<dbReference type="GO" id="GO:0005524">
    <property type="term" value="F:ATP binding"/>
    <property type="evidence" value="ECO:0007669"/>
    <property type="project" value="UniProtKB-UniRule"/>
</dbReference>
<dbReference type="GO" id="GO:0046933">
    <property type="term" value="F:proton-transporting ATP synthase activity, rotational mechanism"/>
    <property type="evidence" value="ECO:0007669"/>
    <property type="project" value="UniProtKB-UniRule"/>
</dbReference>
<dbReference type="CDD" id="cd18113">
    <property type="entry name" value="ATP-synt_F1_alpha_C"/>
    <property type="match status" value="1"/>
</dbReference>
<dbReference type="CDD" id="cd18116">
    <property type="entry name" value="ATP-synt_F1_alpha_N"/>
    <property type="match status" value="1"/>
</dbReference>
<dbReference type="CDD" id="cd01132">
    <property type="entry name" value="F1-ATPase_alpha_CD"/>
    <property type="match status" value="1"/>
</dbReference>
<dbReference type="FunFam" id="1.20.150.20:FF:000001">
    <property type="entry name" value="ATP synthase subunit alpha"/>
    <property type="match status" value="1"/>
</dbReference>
<dbReference type="FunFam" id="2.40.30.20:FF:000001">
    <property type="entry name" value="ATP synthase subunit alpha"/>
    <property type="match status" value="1"/>
</dbReference>
<dbReference type="FunFam" id="3.40.50.300:FF:000002">
    <property type="entry name" value="ATP synthase subunit alpha"/>
    <property type="match status" value="1"/>
</dbReference>
<dbReference type="Gene3D" id="2.40.30.20">
    <property type="match status" value="1"/>
</dbReference>
<dbReference type="Gene3D" id="1.20.150.20">
    <property type="entry name" value="ATP synthase alpha/beta chain, C-terminal domain"/>
    <property type="match status" value="1"/>
</dbReference>
<dbReference type="Gene3D" id="3.40.50.300">
    <property type="entry name" value="P-loop containing nucleotide triphosphate hydrolases"/>
    <property type="match status" value="1"/>
</dbReference>
<dbReference type="HAMAP" id="MF_01346">
    <property type="entry name" value="ATP_synth_alpha_bact"/>
    <property type="match status" value="1"/>
</dbReference>
<dbReference type="InterPro" id="IPR023366">
    <property type="entry name" value="ATP_synth_asu-like_sf"/>
</dbReference>
<dbReference type="InterPro" id="IPR000793">
    <property type="entry name" value="ATP_synth_asu_C"/>
</dbReference>
<dbReference type="InterPro" id="IPR038376">
    <property type="entry name" value="ATP_synth_asu_C_sf"/>
</dbReference>
<dbReference type="InterPro" id="IPR033732">
    <property type="entry name" value="ATP_synth_F1_a_nt-bd_dom"/>
</dbReference>
<dbReference type="InterPro" id="IPR005294">
    <property type="entry name" value="ATP_synth_F1_asu"/>
</dbReference>
<dbReference type="InterPro" id="IPR004100">
    <property type="entry name" value="ATPase_F1/V1/A1_a/bsu_N"/>
</dbReference>
<dbReference type="InterPro" id="IPR036121">
    <property type="entry name" value="ATPase_F1/V1/A1_a/bsu_N_sf"/>
</dbReference>
<dbReference type="InterPro" id="IPR000194">
    <property type="entry name" value="ATPase_F1/V1/A1_a/bsu_nucl-bd"/>
</dbReference>
<dbReference type="InterPro" id="IPR027417">
    <property type="entry name" value="P-loop_NTPase"/>
</dbReference>
<dbReference type="NCBIfam" id="TIGR00962">
    <property type="entry name" value="atpA"/>
    <property type="match status" value="1"/>
</dbReference>
<dbReference type="NCBIfam" id="NF009884">
    <property type="entry name" value="PRK13343.1"/>
    <property type="match status" value="1"/>
</dbReference>
<dbReference type="PANTHER" id="PTHR48082">
    <property type="entry name" value="ATP SYNTHASE SUBUNIT ALPHA, MITOCHONDRIAL"/>
    <property type="match status" value="1"/>
</dbReference>
<dbReference type="PANTHER" id="PTHR48082:SF2">
    <property type="entry name" value="ATP SYNTHASE SUBUNIT ALPHA, MITOCHONDRIAL"/>
    <property type="match status" value="1"/>
</dbReference>
<dbReference type="Pfam" id="PF00006">
    <property type="entry name" value="ATP-synt_ab"/>
    <property type="match status" value="1"/>
</dbReference>
<dbReference type="Pfam" id="PF00306">
    <property type="entry name" value="ATP-synt_ab_C"/>
    <property type="match status" value="1"/>
</dbReference>
<dbReference type="Pfam" id="PF02874">
    <property type="entry name" value="ATP-synt_ab_N"/>
    <property type="match status" value="1"/>
</dbReference>
<dbReference type="PIRSF" id="PIRSF039088">
    <property type="entry name" value="F_ATPase_subunit_alpha"/>
    <property type="match status" value="1"/>
</dbReference>
<dbReference type="SUPFAM" id="SSF47917">
    <property type="entry name" value="C-terminal domain of alpha and beta subunits of F1 ATP synthase"/>
    <property type="match status" value="1"/>
</dbReference>
<dbReference type="SUPFAM" id="SSF50615">
    <property type="entry name" value="N-terminal domain of alpha and beta subunits of F1 ATP synthase"/>
    <property type="match status" value="1"/>
</dbReference>
<dbReference type="SUPFAM" id="SSF52540">
    <property type="entry name" value="P-loop containing nucleoside triphosphate hydrolases"/>
    <property type="match status" value="1"/>
</dbReference>
<feature type="chain" id="PRO_1000166556" description="ATP synthase subunit alpha">
    <location>
        <begin position="1"/>
        <end position="501"/>
    </location>
</feature>
<feature type="binding site" evidence="1">
    <location>
        <begin position="169"/>
        <end position="176"/>
    </location>
    <ligand>
        <name>ATP</name>
        <dbReference type="ChEBI" id="CHEBI:30616"/>
    </ligand>
</feature>
<feature type="site" description="Required for activity" evidence="1">
    <location>
        <position position="362"/>
    </location>
</feature>
<reference key="1">
    <citation type="journal article" date="2009" name="J. Bacteriol.">
        <title>Role of conjugative elements in the evolution of the multidrug-resistant pandemic clone Streptococcus pneumoniae Spain23F ST81.</title>
        <authorList>
            <person name="Croucher N.J."/>
            <person name="Walker D."/>
            <person name="Romero P."/>
            <person name="Lennard N."/>
            <person name="Paterson G.K."/>
            <person name="Bason N.C."/>
            <person name="Mitchell A.M."/>
            <person name="Quail M.A."/>
            <person name="Andrew P.W."/>
            <person name="Parkhill J."/>
            <person name="Bentley S.D."/>
            <person name="Mitchell T.J."/>
        </authorList>
    </citation>
    <scope>NUCLEOTIDE SEQUENCE [LARGE SCALE GENOMIC DNA]</scope>
    <source>
        <strain>ATCC 700669 / Spain 23F-1</strain>
    </source>
</reference>
<comment type="function">
    <text evidence="1">Produces ATP from ADP in the presence of a proton gradient across the membrane. The alpha chain is a regulatory subunit.</text>
</comment>
<comment type="catalytic activity">
    <reaction evidence="1">
        <text>ATP + H2O + 4 H(+)(in) = ADP + phosphate + 5 H(+)(out)</text>
        <dbReference type="Rhea" id="RHEA:57720"/>
        <dbReference type="ChEBI" id="CHEBI:15377"/>
        <dbReference type="ChEBI" id="CHEBI:15378"/>
        <dbReference type="ChEBI" id="CHEBI:30616"/>
        <dbReference type="ChEBI" id="CHEBI:43474"/>
        <dbReference type="ChEBI" id="CHEBI:456216"/>
        <dbReference type="EC" id="7.1.2.2"/>
    </reaction>
</comment>
<comment type="subunit">
    <text evidence="1">F-type ATPases have 2 components, CF(1) - the catalytic core - and CF(0) - the membrane proton channel. CF(1) has five subunits: alpha(3), beta(3), gamma(1), delta(1), epsilon(1). CF(0) has three main subunits: a(1), b(2) and c(9-12). The alpha and beta chains form an alternating ring which encloses part of the gamma chain. CF(1) is attached to CF(0) by a central stalk formed by the gamma and epsilon chains, while a peripheral stalk is formed by the delta and b chains.</text>
</comment>
<comment type="subcellular location">
    <subcellularLocation>
        <location evidence="1">Cell membrane</location>
        <topology evidence="1">Peripheral membrane protein</topology>
    </subcellularLocation>
</comment>
<comment type="similarity">
    <text evidence="1">Belongs to the ATPase alpha/beta chains family.</text>
</comment>
<sequence length="501" mass="54675">MAINAQEISALIKQQIENFKPNFDVTETGVVTYIGDGIARAHGLENVMSGELLNFENGSYGMAQNLESTDVGIIILGDFTDIREGDTIRRTGKIMEVPVGESLIGRVVDPLGRPVDGLGEIHTDKTRPVEAPAPGVMQRKSVSEPLQTGLKAIDALVPIGRGQRELIIGDRQTGKTTIAIDTILNQKDQDMICIYVAIGQKESTVRTQVETLRQYGALDYTIVVTASASQPSPLLFLAPYTGVAMAEEFMYQGKHVLIVYDDLSKQAVAYRELSLLLRRPPGREAFPGDVFYLHSRLLERSAKVSDELGGGSITALPFIETQAGDISAYIATNVISITDGQIFLGDGLFNAGIRPAIDAGSSVSRVGGSAQIKAMKKVAGTLRIDLASYRELEAFTKFGSDLDAATQAKLNRGRRTVEVLKQPVHKPLPVEKQVTILYALTHGFLDTVPVDDIVRFEEEFHAFFDAQHPEILETIRDTKDLPEEAVLDAAITEFLNQSSFQ</sequence>
<proteinExistence type="inferred from homology"/>
<keyword id="KW-0066">ATP synthesis</keyword>
<keyword id="KW-0067">ATP-binding</keyword>
<keyword id="KW-1003">Cell membrane</keyword>
<keyword id="KW-0139">CF(1)</keyword>
<keyword id="KW-0375">Hydrogen ion transport</keyword>
<keyword id="KW-0406">Ion transport</keyword>
<keyword id="KW-0472">Membrane</keyword>
<keyword id="KW-0547">Nucleotide-binding</keyword>
<keyword id="KW-1278">Translocase</keyword>
<keyword id="KW-0813">Transport</keyword>
<protein>
    <recommendedName>
        <fullName evidence="1">ATP synthase subunit alpha</fullName>
        <ecNumber evidence="1">7.1.2.2</ecNumber>
    </recommendedName>
    <alternativeName>
        <fullName evidence="1">ATP synthase F1 sector subunit alpha</fullName>
    </alternativeName>
    <alternativeName>
        <fullName evidence="1">F-ATPase subunit alpha</fullName>
    </alternativeName>
</protein>
<organism>
    <name type="scientific">Streptococcus pneumoniae (strain ATCC 700669 / Spain 23F-1)</name>
    <dbReference type="NCBI Taxonomy" id="561276"/>
    <lineage>
        <taxon>Bacteria</taxon>
        <taxon>Bacillati</taxon>
        <taxon>Bacillota</taxon>
        <taxon>Bacilli</taxon>
        <taxon>Lactobacillales</taxon>
        <taxon>Streptococcaceae</taxon>
        <taxon>Streptococcus</taxon>
    </lineage>
</organism>
<name>ATPA_STRPJ</name>
<accession>B8ZLB1</accession>
<evidence type="ECO:0000255" key="1">
    <source>
        <dbReference type="HAMAP-Rule" id="MF_01346"/>
    </source>
</evidence>
<gene>
    <name evidence="1" type="primary">atpA</name>
    <name type="ordered locus">SPN23F14740</name>
</gene>